<proteinExistence type="inferred from homology"/>
<reference key="1">
    <citation type="submission" date="2009-01" db="EMBL/GenBank/DDBJ databases">
        <title>Complete sequence of Anaeromyxobacter dehalogenans 2CP-1.</title>
        <authorList>
            <person name="Lucas S."/>
            <person name="Copeland A."/>
            <person name="Lapidus A."/>
            <person name="Glavina del Rio T."/>
            <person name="Dalin E."/>
            <person name="Tice H."/>
            <person name="Bruce D."/>
            <person name="Goodwin L."/>
            <person name="Pitluck S."/>
            <person name="Saunders E."/>
            <person name="Brettin T."/>
            <person name="Detter J.C."/>
            <person name="Han C."/>
            <person name="Larimer F."/>
            <person name="Land M."/>
            <person name="Hauser L."/>
            <person name="Kyrpides N."/>
            <person name="Ovchinnikova G."/>
            <person name="Beliaev A.S."/>
            <person name="Richardson P."/>
        </authorList>
    </citation>
    <scope>NUCLEOTIDE SEQUENCE [LARGE SCALE GENOMIC DNA]</scope>
    <source>
        <strain>2CP-1 / ATCC BAA-258</strain>
    </source>
</reference>
<evidence type="ECO:0000255" key="1">
    <source>
        <dbReference type="HAMAP-Rule" id="MF_00372"/>
    </source>
</evidence>
<organism>
    <name type="scientific">Anaeromyxobacter dehalogenans (strain 2CP-1 / ATCC BAA-258)</name>
    <dbReference type="NCBI Taxonomy" id="455488"/>
    <lineage>
        <taxon>Bacteria</taxon>
        <taxon>Pseudomonadati</taxon>
        <taxon>Myxococcota</taxon>
        <taxon>Myxococcia</taxon>
        <taxon>Myxococcales</taxon>
        <taxon>Cystobacterineae</taxon>
        <taxon>Anaeromyxobacteraceae</taxon>
        <taxon>Anaeromyxobacter</taxon>
    </lineage>
</organism>
<gene>
    <name evidence="1" type="primary">hutI</name>
    <name type="ordered locus">A2cp1_2448</name>
</gene>
<protein>
    <recommendedName>
        <fullName evidence="1">Imidazolonepropionase</fullName>
        <ecNumber evidence="1">3.5.2.7</ecNumber>
    </recommendedName>
    <alternativeName>
        <fullName evidence="1">Imidazolone-5-propionate hydrolase</fullName>
    </alternativeName>
</protein>
<accession>B8JBF9</accession>
<name>HUTI_ANAD2</name>
<dbReference type="EC" id="3.5.2.7" evidence="1"/>
<dbReference type="EMBL" id="CP001359">
    <property type="protein sequence ID" value="ACL65786.1"/>
    <property type="molecule type" value="Genomic_DNA"/>
</dbReference>
<dbReference type="RefSeq" id="WP_012633587.1">
    <property type="nucleotide sequence ID" value="NC_011891.1"/>
</dbReference>
<dbReference type="SMR" id="B8JBF9"/>
<dbReference type="KEGG" id="acp:A2cp1_2448"/>
<dbReference type="HOGENOM" id="CLU_041647_0_1_7"/>
<dbReference type="UniPathway" id="UPA00379">
    <property type="reaction ID" value="UER00551"/>
</dbReference>
<dbReference type="Proteomes" id="UP000007089">
    <property type="component" value="Chromosome"/>
</dbReference>
<dbReference type="GO" id="GO:0005737">
    <property type="term" value="C:cytoplasm"/>
    <property type="evidence" value="ECO:0007669"/>
    <property type="project" value="UniProtKB-SubCell"/>
</dbReference>
<dbReference type="GO" id="GO:0050480">
    <property type="term" value="F:imidazolonepropionase activity"/>
    <property type="evidence" value="ECO:0007669"/>
    <property type="project" value="UniProtKB-UniRule"/>
</dbReference>
<dbReference type="GO" id="GO:0005506">
    <property type="term" value="F:iron ion binding"/>
    <property type="evidence" value="ECO:0007669"/>
    <property type="project" value="UniProtKB-UniRule"/>
</dbReference>
<dbReference type="GO" id="GO:0008270">
    <property type="term" value="F:zinc ion binding"/>
    <property type="evidence" value="ECO:0007669"/>
    <property type="project" value="UniProtKB-UniRule"/>
</dbReference>
<dbReference type="GO" id="GO:0019556">
    <property type="term" value="P:L-histidine catabolic process to glutamate and formamide"/>
    <property type="evidence" value="ECO:0007669"/>
    <property type="project" value="UniProtKB-UniPathway"/>
</dbReference>
<dbReference type="GO" id="GO:0019557">
    <property type="term" value="P:L-histidine catabolic process to glutamate and formate"/>
    <property type="evidence" value="ECO:0007669"/>
    <property type="project" value="UniProtKB-UniPathway"/>
</dbReference>
<dbReference type="Gene3D" id="3.20.20.140">
    <property type="entry name" value="Metal-dependent hydrolases"/>
    <property type="match status" value="1"/>
</dbReference>
<dbReference type="Gene3D" id="2.30.40.10">
    <property type="entry name" value="Urease, subunit C, domain 1"/>
    <property type="match status" value="1"/>
</dbReference>
<dbReference type="HAMAP" id="MF_00372">
    <property type="entry name" value="HutI"/>
    <property type="match status" value="1"/>
</dbReference>
<dbReference type="InterPro" id="IPR006680">
    <property type="entry name" value="Amidohydro-rel"/>
</dbReference>
<dbReference type="InterPro" id="IPR005920">
    <property type="entry name" value="HutI"/>
</dbReference>
<dbReference type="InterPro" id="IPR011059">
    <property type="entry name" value="Metal-dep_hydrolase_composite"/>
</dbReference>
<dbReference type="InterPro" id="IPR032466">
    <property type="entry name" value="Metal_Hydrolase"/>
</dbReference>
<dbReference type="NCBIfam" id="TIGR01224">
    <property type="entry name" value="hutI"/>
    <property type="match status" value="1"/>
</dbReference>
<dbReference type="PANTHER" id="PTHR42752">
    <property type="entry name" value="IMIDAZOLONEPROPIONASE"/>
    <property type="match status" value="1"/>
</dbReference>
<dbReference type="PANTHER" id="PTHR42752:SF1">
    <property type="entry name" value="IMIDAZOLONEPROPIONASE-RELATED"/>
    <property type="match status" value="1"/>
</dbReference>
<dbReference type="Pfam" id="PF01979">
    <property type="entry name" value="Amidohydro_1"/>
    <property type="match status" value="1"/>
</dbReference>
<dbReference type="SUPFAM" id="SSF51338">
    <property type="entry name" value="Composite domain of metallo-dependent hydrolases"/>
    <property type="match status" value="1"/>
</dbReference>
<dbReference type="SUPFAM" id="SSF51556">
    <property type="entry name" value="Metallo-dependent hydrolases"/>
    <property type="match status" value="1"/>
</dbReference>
<keyword id="KW-0963">Cytoplasm</keyword>
<keyword id="KW-0369">Histidine metabolism</keyword>
<keyword id="KW-0378">Hydrolase</keyword>
<keyword id="KW-0408">Iron</keyword>
<keyword id="KW-0479">Metal-binding</keyword>
<keyword id="KW-0862">Zinc</keyword>
<comment type="function">
    <text evidence="1">Catalyzes the hydrolytic cleavage of the carbon-nitrogen bond in imidazolone-5-propanoate to yield N-formimidoyl-L-glutamate. It is the third step in the universal histidine degradation pathway.</text>
</comment>
<comment type="catalytic activity">
    <reaction evidence="1">
        <text>4-imidazolone-5-propanoate + H2O = N-formimidoyl-L-glutamate</text>
        <dbReference type="Rhea" id="RHEA:23660"/>
        <dbReference type="ChEBI" id="CHEBI:15377"/>
        <dbReference type="ChEBI" id="CHEBI:58928"/>
        <dbReference type="ChEBI" id="CHEBI:77893"/>
        <dbReference type="EC" id="3.5.2.7"/>
    </reaction>
</comment>
<comment type="cofactor">
    <cofactor evidence="1">
        <name>Zn(2+)</name>
        <dbReference type="ChEBI" id="CHEBI:29105"/>
    </cofactor>
    <cofactor evidence="1">
        <name>Fe(3+)</name>
        <dbReference type="ChEBI" id="CHEBI:29034"/>
    </cofactor>
    <text evidence="1">Binds 1 zinc or iron ion per subunit.</text>
</comment>
<comment type="pathway">
    <text evidence="1">Amino-acid degradation; L-histidine degradation into L-glutamate; N-formimidoyl-L-glutamate from L-histidine: step 3/3.</text>
</comment>
<comment type="subcellular location">
    <subcellularLocation>
        <location evidence="1">Cytoplasm</location>
    </subcellularLocation>
</comment>
<comment type="similarity">
    <text evidence="1">Belongs to the metallo-dependent hydrolases superfamily. HutI family.</text>
</comment>
<feature type="chain" id="PRO_1000133876" description="Imidazolonepropionase">
    <location>
        <begin position="1"/>
        <end position="421"/>
    </location>
</feature>
<feature type="binding site" evidence="1">
    <location>
        <position position="76"/>
    </location>
    <ligand>
        <name>Fe(3+)</name>
        <dbReference type="ChEBI" id="CHEBI:29034"/>
    </ligand>
</feature>
<feature type="binding site" evidence="1">
    <location>
        <position position="76"/>
    </location>
    <ligand>
        <name>Zn(2+)</name>
        <dbReference type="ChEBI" id="CHEBI:29105"/>
    </ligand>
</feature>
<feature type="binding site" evidence="1">
    <location>
        <position position="78"/>
    </location>
    <ligand>
        <name>Fe(3+)</name>
        <dbReference type="ChEBI" id="CHEBI:29034"/>
    </ligand>
</feature>
<feature type="binding site" evidence="1">
    <location>
        <position position="78"/>
    </location>
    <ligand>
        <name>Zn(2+)</name>
        <dbReference type="ChEBI" id="CHEBI:29105"/>
    </ligand>
</feature>
<feature type="binding site" evidence="1">
    <location>
        <position position="85"/>
    </location>
    <ligand>
        <name>4-imidazolone-5-propanoate</name>
        <dbReference type="ChEBI" id="CHEBI:77893"/>
    </ligand>
</feature>
<feature type="binding site" evidence="1">
    <location>
        <position position="148"/>
    </location>
    <ligand>
        <name>4-imidazolone-5-propanoate</name>
        <dbReference type="ChEBI" id="CHEBI:77893"/>
    </ligand>
</feature>
<feature type="binding site" evidence="1">
    <location>
        <position position="148"/>
    </location>
    <ligand>
        <name>N-formimidoyl-L-glutamate</name>
        <dbReference type="ChEBI" id="CHEBI:58928"/>
    </ligand>
</feature>
<feature type="binding site" evidence="1">
    <location>
        <position position="182"/>
    </location>
    <ligand>
        <name>4-imidazolone-5-propanoate</name>
        <dbReference type="ChEBI" id="CHEBI:77893"/>
    </ligand>
</feature>
<feature type="binding site" evidence="1">
    <location>
        <position position="247"/>
    </location>
    <ligand>
        <name>Fe(3+)</name>
        <dbReference type="ChEBI" id="CHEBI:29034"/>
    </ligand>
</feature>
<feature type="binding site" evidence="1">
    <location>
        <position position="247"/>
    </location>
    <ligand>
        <name>Zn(2+)</name>
        <dbReference type="ChEBI" id="CHEBI:29105"/>
    </ligand>
</feature>
<feature type="binding site" evidence="1">
    <location>
        <position position="250"/>
    </location>
    <ligand>
        <name>4-imidazolone-5-propanoate</name>
        <dbReference type="ChEBI" id="CHEBI:77893"/>
    </ligand>
</feature>
<feature type="binding site" evidence="1">
    <location>
        <position position="324"/>
    </location>
    <ligand>
        <name>N-formimidoyl-L-glutamate</name>
        <dbReference type="ChEBI" id="CHEBI:58928"/>
    </ligand>
</feature>
<feature type="binding site" evidence="1">
    <location>
        <position position="326"/>
    </location>
    <ligand>
        <name>N-formimidoyl-L-glutamate</name>
        <dbReference type="ChEBI" id="CHEBI:58928"/>
    </ligand>
</feature>
<feature type="binding site" evidence="1">
    <location>
        <position position="327"/>
    </location>
    <ligand>
        <name>4-imidazolone-5-propanoate</name>
        <dbReference type="ChEBI" id="CHEBI:77893"/>
    </ligand>
</feature>
<sequence>MSRPTATLVLRNAVVATCDRSPSDAGLLPGAAVAVEGRRVAWVGRDRDLEAEVNAGGAQVIDARGGLVTPGLVDSHTHLVFAGERAGEFALRCAGRSYLQVALSGGGIAVTTRATRAAPDEQLLADAAARARRLIAQGVTTIEVKSGYGLDAPEELRLLRIVHQLGDALGGDATILPTLLFHAVPPEQVGDRAAFVREACAALIPQVARERLAVFCDVFVEDGAFAPDEARRLLQAAKDRGLVPRVHAEQLTAGGGARLAAELGCASADHLEELDDAGVAALAEARVVAGLLPLSTLFLGSERYAPARRLLEAGVPVSLATNMNPGSAMSENVGLTLSLACLKLGLTPAEALVAFTAGGARALRQPDLGRIARGADADLVLWGCGSPEHLAWHMAVNHALVVVKHGRVVHEAPSAAMVDCR</sequence>